<name>ARMET_DROVI</name>
<dbReference type="EMBL" id="CH940650">
    <property type="protein sequence ID" value="EDW66730.1"/>
    <property type="molecule type" value="Genomic_DNA"/>
</dbReference>
<dbReference type="RefSeq" id="XP_002053210.1">
    <property type="nucleotide sequence ID" value="XM_002053174.4"/>
</dbReference>
<dbReference type="SMR" id="B4LX78"/>
<dbReference type="FunCoup" id="B4LX78">
    <property type="interactions" value="384"/>
</dbReference>
<dbReference type="STRING" id="7244.B4LX78"/>
<dbReference type="EnsemblMetazoa" id="FBtr0239689">
    <property type="protein sequence ID" value="FBpp0238181"/>
    <property type="gene ID" value="FBgn0210861"/>
</dbReference>
<dbReference type="EnsemblMetazoa" id="XM_002053174.3">
    <property type="protein sequence ID" value="XP_002053210.1"/>
    <property type="gene ID" value="LOC6630749"/>
</dbReference>
<dbReference type="GeneID" id="6630749"/>
<dbReference type="KEGG" id="dvi:6630749"/>
<dbReference type="CTD" id="7873"/>
<dbReference type="eggNOG" id="KOG4154">
    <property type="taxonomic scope" value="Eukaryota"/>
</dbReference>
<dbReference type="HOGENOM" id="CLU_099080_1_0_1"/>
<dbReference type="InParanoid" id="B4LX78"/>
<dbReference type="OMA" id="WSMPADK"/>
<dbReference type="OrthoDB" id="5597848at2759"/>
<dbReference type="PhylomeDB" id="B4LX78"/>
<dbReference type="ChiTaRS" id="Manf">
    <property type="organism name" value="fly"/>
</dbReference>
<dbReference type="Proteomes" id="UP000008792">
    <property type="component" value="Unassembled WGS sequence"/>
</dbReference>
<dbReference type="GO" id="GO:0005783">
    <property type="term" value="C:endoplasmic reticulum"/>
    <property type="evidence" value="ECO:0007669"/>
    <property type="project" value="EnsemblMetazoa"/>
</dbReference>
<dbReference type="GO" id="GO:0005615">
    <property type="term" value="C:extracellular space"/>
    <property type="evidence" value="ECO:0007669"/>
    <property type="project" value="TreeGrafter"/>
</dbReference>
<dbReference type="GO" id="GO:0045202">
    <property type="term" value="C:synapse"/>
    <property type="evidence" value="ECO:0007669"/>
    <property type="project" value="GOC"/>
</dbReference>
<dbReference type="GO" id="GO:0005509">
    <property type="term" value="F:calcium ion binding"/>
    <property type="evidence" value="ECO:0007669"/>
    <property type="project" value="InterPro"/>
</dbReference>
<dbReference type="GO" id="GO:0042417">
    <property type="term" value="P:dopamine metabolic process"/>
    <property type="evidence" value="ECO:0007669"/>
    <property type="project" value="EnsemblMetazoa"/>
</dbReference>
<dbReference type="GO" id="GO:0071542">
    <property type="term" value="P:dopaminergic neuron differentiation"/>
    <property type="evidence" value="ECO:0007669"/>
    <property type="project" value="TreeGrafter"/>
</dbReference>
<dbReference type="GO" id="GO:0070050">
    <property type="term" value="P:neuron cellular homeostasis"/>
    <property type="evidence" value="ECO:0007669"/>
    <property type="project" value="EnsemblMetazoa"/>
</dbReference>
<dbReference type="GO" id="GO:0031175">
    <property type="term" value="P:neuron projection development"/>
    <property type="evidence" value="ECO:0007669"/>
    <property type="project" value="EnsemblMetazoa"/>
</dbReference>
<dbReference type="GO" id="GO:0001963">
    <property type="term" value="P:synaptic transmission, dopaminergic"/>
    <property type="evidence" value="ECO:0007669"/>
    <property type="project" value="EnsemblMetazoa"/>
</dbReference>
<dbReference type="FunFam" id="1.10.225.10:FF:000003">
    <property type="entry name" value="Mesencephalic astrocyte-derived neurotrophic factor"/>
    <property type="match status" value="1"/>
</dbReference>
<dbReference type="FunFam" id="1.10.720.30:FF:000003">
    <property type="entry name" value="Mesencephalic astrocyte-derived neurotrophic factor"/>
    <property type="match status" value="1"/>
</dbReference>
<dbReference type="Gene3D" id="1.10.720.30">
    <property type="entry name" value="SAP domain"/>
    <property type="match status" value="1"/>
</dbReference>
<dbReference type="Gene3D" id="1.10.225.10">
    <property type="entry name" value="Saposin-like"/>
    <property type="match status" value="1"/>
</dbReference>
<dbReference type="InterPro" id="IPR045333">
    <property type="entry name" value="ARMET-like"/>
</dbReference>
<dbReference type="InterPro" id="IPR019345">
    <property type="entry name" value="ARMET_C"/>
</dbReference>
<dbReference type="InterPro" id="IPR045332">
    <property type="entry name" value="ARMET_N"/>
</dbReference>
<dbReference type="InterPro" id="IPR018247">
    <property type="entry name" value="EF_Hand_1_Ca_BS"/>
</dbReference>
<dbReference type="InterPro" id="IPR002048">
    <property type="entry name" value="EF_hand_dom"/>
</dbReference>
<dbReference type="InterPro" id="IPR036361">
    <property type="entry name" value="SAP_dom_sf"/>
</dbReference>
<dbReference type="PANTHER" id="PTHR12990">
    <property type="entry name" value="ARMET-LIKE PROTEIN"/>
    <property type="match status" value="1"/>
</dbReference>
<dbReference type="PANTHER" id="PTHR12990:SF5">
    <property type="entry name" value="MESENCEPHALIC ASTROCYTE-DERIVED NEUROTROPHIC FACTOR HOMOLOG"/>
    <property type="match status" value="1"/>
</dbReference>
<dbReference type="Pfam" id="PF10208">
    <property type="entry name" value="ARMET_C"/>
    <property type="match status" value="1"/>
</dbReference>
<dbReference type="Pfam" id="PF20145">
    <property type="entry name" value="ARMET_N"/>
    <property type="match status" value="1"/>
</dbReference>
<dbReference type="SUPFAM" id="SSF68906">
    <property type="entry name" value="SAP domain"/>
    <property type="match status" value="1"/>
</dbReference>
<keyword id="KW-0217">Developmental protein</keyword>
<keyword id="KW-1015">Disulfide bond</keyword>
<keyword id="KW-1185">Reference proteome</keyword>
<keyword id="KW-0964">Secreted</keyword>
<keyword id="KW-0732">Signal</keyword>
<gene>
    <name evidence="2" type="primary">Manf</name>
    <name type="ORF">GJ23764</name>
</gene>
<protein>
    <recommendedName>
        <fullName>Mesencephalic astrocyte-derived neurotrophic factor homolog</fullName>
    </recommendedName>
    <alternativeName>
        <fullName>MANF/CDNF-like protein</fullName>
    </alternativeName>
</protein>
<sequence>MNTSHIVLMICFIVGVGQTALALKEDDCEVCVKTVKRFADTLDDATKKDYKLIETAFKKYCKTQKNKEHRFCYYLGGLEESATGILNELSKPLSWSMPAEKVCEKLKKKDAQICDLRYEKQIDLNSVDLKKLKVRDLKKILNDWDESCDGCLEKSDFIKRIEELKPKYSRNEL</sequence>
<reference evidence="4" key="1">
    <citation type="journal article" date="2007" name="Nature">
        <title>Evolution of genes and genomes on the Drosophila phylogeny.</title>
        <authorList>
            <consortium name="Drosophila 12 genomes consortium"/>
        </authorList>
    </citation>
    <scope>NUCLEOTIDE SEQUENCE [LARGE SCALE GENOMIC DNA]</scope>
    <source>
        <strain evidence="4">Tucson 15010-1051.87</strain>
    </source>
</reference>
<feature type="signal peptide" evidence="3">
    <location>
        <begin position="1"/>
        <end position="22"/>
    </location>
</feature>
<feature type="chain" id="PRO_0000390946" description="Mesencephalic astrocyte-derived neurotrophic factor homolog">
    <location>
        <begin position="23"/>
        <end position="173"/>
    </location>
</feature>
<feature type="disulfide bond" evidence="1">
    <location>
        <begin position="28"/>
        <end position="114"/>
    </location>
</feature>
<feature type="disulfide bond" evidence="1">
    <location>
        <begin position="31"/>
        <end position="103"/>
    </location>
</feature>
<feature type="disulfide bond" evidence="1">
    <location>
        <begin position="61"/>
        <end position="72"/>
    </location>
</feature>
<feature type="disulfide bond" evidence="1">
    <location>
        <begin position="148"/>
        <end position="151"/>
    </location>
</feature>
<organism>
    <name type="scientific">Drosophila virilis</name>
    <name type="common">Fruit fly</name>
    <dbReference type="NCBI Taxonomy" id="7244"/>
    <lineage>
        <taxon>Eukaryota</taxon>
        <taxon>Metazoa</taxon>
        <taxon>Ecdysozoa</taxon>
        <taxon>Arthropoda</taxon>
        <taxon>Hexapoda</taxon>
        <taxon>Insecta</taxon>
        <taxon>Pterygota</taxon>
        <taxon>Neoptera</taxon>
        <taxon>Endopterygota</taxon>
        <taxon>Diptera</taxon>
        <taxon>Brachycera</taxon>
        <taxon>Muscomorpha</taxon>
        <taxon>Ephydroidea</taxon>
        <taxon>Drosophilidae</taxon>
        <taxon>Drosophila</taxon>
    </lineage>
</organism>
<comment type="function">
    <text evidence="2">Required during the maturation of the embryonic nervous system for maintenance of neuronal and cuticular connectivity. Essential for maintenance of dopaminergic neurons and dopamine levels (By similarity).</text>
</comment>
<comment type="subcellular location">
    <subcellularLocation>
        <location evidence="2">Secreted</location>
    </subcellularLocation>
</comment>
<comment type="similarity">
    <text evidence="3">Belongs to the ARMET family.</text>
</comment>
<proteinExistence type="inferred from homology"/>
<accession>B4LX78</accession>
<evidence type="ECO:0000250" key="1">
    <source>
        <dbReference type="UniProtKB" id="P55145"/>
    </source>
</evidence>
<evidence type="ECO:0000250" key="2">
    <source>
        <dbReference type="UniProtKB" id="Q9XZ63"/>
    </source>
</evidence>
<evidence type="ECO:0000255" key="3"/>
<evidence type="ECO:0000312" key="4">
    <source>
        <dbReference type="EMBL" id="EDW66730.1"/>
    </source>
</evidence>